<name>PURA_STRP3</name>
<sequence length="430" mass="47407">MTSVVVVGTQWGDEGKGKITDFLSADAEVIARYQGGDNAGHTIVIDGKKFKLHLIPSGIFFPQKISVIGNGVVVNPKSLVKELAYLHDEGVTTDNLRISDRAHVILPYHIQLDQLQEDAKGDNKIGTTIKGIGPAYMDKAARVGIRIADLLDKDIFAERLRINLAEKNRLFEKMYNSTPLDFDAIFEEYYAYGQEIKQYVTDTSVILNDALDAGKRVLFEGAQGVMLDIDQGTYPFVTSSNPVAGGVTIGSGVGPSKINKVVGVCKAYTSRVGDGPFPTELFDEVGERIREVGHEYGTTTGRPRRVGWFDSVVMRHSRRVSGITNLSLNSIDVLSGLDTVKICVAYDLDGKRIDYYPASLEQLKRCKPIYEELPGWQEDITGVRSLDELPENARNYVRRVGELVGVRISTFSVGPGREQTNILESVWASI</sequence>
<gene>
    <name evidence="1" type="primary">purA</name>
    <name type="ordered locus">SpyM3_0125</name>
</gene>
<dbReference type="EC" id="6.3.4.4" evidence="1"/>
<dbReference type="EMBL" id="AE014074">
    <property type="protein sequence ID" value="AAM78732.1"/>
    <property type="molecule type" value="Genomic_DNA"/>
</dbReference>
<dbReference type="RefSeq" id="WP_011054138.1">
    <property type="nucleotide sequence ID" value="NC_004070.1"/>
</dbReference>
<dbReference type="SMR" id="P0DD54"/>
<dbReference type="KEGG" id="spg:SpyM3_0125"/>
<dbReference type="HOGENOM" id="CLU_029848_0_0_9"/>
<dbReference type="UniPathway" id="UPA00075">
    <property type="reaction ID" value="UER00335"/>
</dbReference>
<dbReference type="Proteomes" id="UP000000564">
    <property type="component" value="Chromosome"/>
</dbReference>
<dbReference type="GO" id="GO:0005737">
    <property type="term" value="C:cytoplasm"/>
    <property type="evidence" value="ECO:0007669"/>
    <property type="project" value="UniProtKB-SubCell"/>
</dbReference>
<dbReference type="GO" id="GO:0004019">
    <property type="term" value="F:adenylosuccinate synthase activity"/>
    <property type="evidence" value="ECO:0007669"/>
    <property type="project" value="UniProtKB-UniRule"/>
</dbReference>
<dbReference type="GO" id="GO:0005525">
    <property type="term" value="F:GTP binding"/>
    <property type="evidence" value="ECO:0007669"/>
    <property type="project" value="UniProtKB-UniRule"/>
</dbReference>
<dbReference type="GO" id="GO:0000287">
    <property type="term" value="F:magnesium ion binding"/>
    <property type="evidence" value="ECO:0007669"/>
    <property type="project" value="UniProtKB-UniRule"/>
</dbReference>
<dbReference type="GO" id="GO:0044208">
    <property type="term" value="P:'de novo' AMP biosynthetic process"/>
    <property type="evidence" value="ECO:0007669"/>
    <property type="project" value="UniProtKB-UniRule"/>
</dbReference>
<dbReference type="GO" id="GO:0046040">
    <property type="term" value="P:IMP metabolic process"/>
    <property type="evidence" value="ECO:0007669"/>
    <property type="project" value="TreeGrafter"/>
</dbReference>
<dbReference type="CDD" id="cd03108">
    <property type="entry name" value="AdSS"/>
    <property type="match status" value="1"/>
</dbReference>
<dbReference type="FunFam" id="1.10.300.10:FF:000001">
    <property type="entry name" value="Adenylosuccinate synthetase"/>
    <property type="match status" value="1"/>
</dbReference>
<dbReference type="FunFam" id="3.90.170.10:FF:000001">
    <property type="entry name" value="Adenylosuccinate synthetase"/>
    <property type="match status" value="1"/>
</dbReference>
<dbReference type="Gene3D" id="3.40.440.10">
    <property type="entry name" value="Adenylosuccinate Synthetase, subunit A, domain 1"/>
    <property type="match status" value="1"/>
</dbReference>
<dbReference type="Gene3D" id="1.10.300.10">
    <property type="entry name" value="Adenylosuccinate Synthetase, subunit A, domain 2"/>
    <property type="match status" value="1"/>
</dbReference>
<dbReference type="Gene3D" id="3.90.170.10">
    <property type="entry name" value="Adenylosuccinate Synthetase, subunit A, domain 3"/>
    <property type="match status" value="1"/>
</dbReference>
<dbReference type="HAMAP" id="MF_00011">
    <property type="entry name" value="Adenylosucc_synth"/>
    <property type="match status" value="1"/>
</dbReference>
<dbReference type="InterPro" id="IPR018220">
    <property type="entry name" value="Adenylosuccin_syn_GTP-bd"/>
</dbReference>
<dbReference type="InterPro" id="IPR033128">
    <property type="entry name" value="Adenylosuccin_syn_Lys_AS"/>
</dbReference>
<dbReference type="InterPro" id="IPR042109">
    <property type="entry name" value="Adenylosuccinate_synth_dom1"/>
</dbReference>
<dbReference type="InterPro" id="IPR042110">
    <property type="entry name" value="Adenylosuccinate_synth_dom2"/>
</dbReference>
<dbReference type="InterPro" id="IPR042111">
    <property type="entry name" value="Adenylosuccinate_synth_dom3"/>
</dbReference>
<dbReference type="InterPro" id="IPR001114">
    <property type="entry name" value="Adenylosuccinate_synthetase"/>
</dbReference>
<dbReference type="InterPro" id="IPR027417">
    <property type="entry name" value="P-loop_NTPase"/>
</dbReference>
<dbReference type="NCBIfam" id="NF002223">
    <property type="entry name" value="PRK01117.1"/>
    <property type="match status" value="1"/>
</dbReference>
<dbReference type="NCBIfam" id="TIGR00184">
    <property type="entry name" value="purA"/>
    <property type="match status" value="1"/>
</dbReference>
<dbReference type="PANTHER" id="PTHR11846">
    <property type="entry name" value="ADENYLOSUCCINATE SYNTHETASE"/>
    <property type="match status" value="1"/>
</dbReference>
<dbReference type="PANTHER" id="PTHR11846:SF0">
    <property type="entry name" value="ADENYLOSUCCINATE SYNTHETASE"/>
    <property type="match status" value="1"/>
</dbReference>
<dbReference type="Pfam" id="PF00709">
    <property type="entry name" value="Adenylsucc_synt"/>
    <property type="match status" value="1"/>
</dbReference>
<dbReference type="SMART" id="SM00788">
    <property type="entry name" value="Adenylsucc_synt"/>
    <property type="match status" value="1"/>
</dbReference>
<dbReference type="SUPFAM" id="SSF52540">
    <property type="entry name" value="P-loop containing nucleoside triphosphate hydrolases"/>
    <property type="match status" value="1"/>
</dbReference>
<dbReference type="PROSITE" id="PS01266">
    <property type="entry name" value="ADENYLOSUCCIN_SYN_1"/>
    <property type="match status" value="1"/>
</dbReference>
<dbReference type="PROSITE" id="PS00513">
    <property type="entry name" value="ADENYLOSUCCIN_SYN_2"/>
    <property type="match status" value="1"/>
</dbReference>
<evidence type="ECO:0000255" key="1">
    <source>
        <dbReference type="HAMAP-Rule" id="MF_00011"/>
    </source>
</evidence>
<comment type="function">
    <text evidence="1">Plays an important role in the de novo pathway of purine nucleotide biosynthesis. Catalyzes the first committed step in the biosynthesis of AMP from IMP.</text>
</comment>
<comment type="catalytic activity">
    <reaction evidence="1">
        <text>IMP + L-aspartate + GTP = N(6)-(1,2-dicarboxyethyl)-AMP + GDP + phosphate + 2 H(+)</text>
        <dbReference type="Rhea" id="RHEA:15753"/>
        <dbReference type="ChEBI" id="CHEBI:15378"/>
        <dbReference type="ChEBI" id="CHEBI:29991"/>
        <dbReference type="ChEBI" id="CHEBI:37565"/>
        <dbReference type="ChEBI" id="CHEBI:43474"/>
        <dbReference type="ChEBI" id="CHEBI:57567"/>
        <dbReference type="ChEBI" id="CHEBI:58053"/>
        <dbReference type="ChEBI" id="CHEBI:58189"/>
        <dbReference type="EC" id="6.3.4.4"/>
    </reaction>
</comment>
<comment type="cofactor">
    <cofactor evidence="1">
        <name>Mg(2+)</name>
        <dbReference type="ChEBI" id="CHEBI:18420"/>
    </cofactor>
    <text evidence="1">Binds 1 Mg(2+) ion per subunit.</text>
</comment>
<comment type="pathway">
    <text evidence="1">Purine metabolism; AMP biosynthesis via de novo pathway; AMP from IMP: step 1/2.</text>
</comment>
<comment type="subunit">
    <text evidence="1">Homodimer.</text>
</comment>
<comment type="subcellular location">
    <subcellularLocation>
        <location evidence="1">Cytoplasm</location>
    </subcellularLocation>
</comment>
<comment type="similarity">
    <text evidence="1">Belongs to the adenylosuccinate synthetase family.</text>
</comment>
<protein>
    <recommendedName>
        <fullName evidence="1">Adenylosuccinate synthetase</fullName>
        <shortName evidence="1">AMPSase</shortName>
        <shortName evidence="1">AdSS</shortName>
        <ecNumber evidence="1">6.3.4.4</ecNumber>
    </recommendedName>
    <alternativeName>
        <fullName evidence="1">IMP--aspartate ligase</fullName>
    </alternativeName>
</protein>
<proteinExistence type="inferred from homology"/>
<accession>P0DD54</accession>
<accession>Q8K8S7</accession>
<reference key="1">
    <citation type="journal article" date="2002" name="Proc. Natl. Acad. Sci. U.S.A.">
        <title>Genome sequence of a serotype M3 strain of group A Streptococcus: phage-encoded toxins, the high-virulence phenotype, and clone emergence.</title>
        <authorList>
            <person name="Beres S.B."/>
            <person name="Sylva G.L."/>
            <person name="Barbian K.D."/>
            <person name="Lei B."/>
            <person name="Hoff J.S."/>
            <person name="Mammarella N.D."/>
            <person name="Liu M.-Y."/>
            <person name="Smoot J.C."/>
            <person name="Porcella S.F."/>
            <person name="Parkins L.D."/>
            <person name="Campbell D.S."/>
            <person name="Smith T.M."/>
            <person name="McCormick J.K."/>
            <person name="Leung D.Y.M."/>
            <person name="Schlievert P.M."/>
            <person name="Musser J.M."/>
        </authorList>
    </citation>
    <scope>NUCLEOTIDE SEQUENCE [LARGE SCALE GENOMIC DNA]</scope>
    <source>
        <strain>ATCC BAA-595 / MGAS315</strain>
    </source>
</reference>
<organism>
    <name type="scientific">Streptococcus pyogenes serotype M3 (strain ATCC BAA-595 / MGAS315)</name>
    <dbReference type="NCBI Taxonomy" id="198466"/>
    <lineage>
        <taxon>Bacteria</taxon>
        <taxon>Bacillati</taxon>
        <taxon>Bacillota</taxon>
        <taxon>Bacilli</taxon>
        <taxon>Lactobacillales</taxon>
        <taxon>Streptococcaceae</taxon>
        <taxon>Streptococcus</taxon>
    </lineage>
</organism>
<feature type="chain" id="PRO_0000095242" description="Adenylosuccinate synthetase">
    <location>
        <begin position="1"/>
        <end position="430"/>
    </location>
</feature>
<feature type="active site" description="Proton acceptor" evidence="1">
    <location>
        <position position="13"/>
    </location>
</feature>
<feature type="active site" description="Proton donor" evidence="1">
    <location>
        <position position="41"/>
    </location>
</feature>
<feature type="binding site" evidence="1">
    <location>
        <begin position="12"/>
        <end position="18"/>
    </location>
    <ligand>
        <name>GTP</name>
        <dbReference type="ChEBI" id="CHEBI:37565"/>
    </ligand>
</feature>
<feature type="binding site" description="in other chain" evidence="1">
    <location>
        <begin position="13"/>
        <end position="16"/>
    </location>
    <ligand>
        <name>IMP</name>
        <dbReference type="ChEBI" id="CHEBI:58053"/>
        <note>ligand shared between dimeric partners</note>
    </ligand>
</feature>
<feature type="binding site" evidence="1">
    <location>
        <position position="13"/>
    </location>
    <ligand>
        <name>Mg(2+)</name>
        <dbReference type="ChEBI" id="CHEBI:18420"/>
    </ligand>
</feature>
<feature type="binding site" description="in other chain" evidence="1">
    <location>
        <begin position="38"/>
        <end position="41"/>
    </location>
    <ligand>
        <name>IMP</name>
        <dbReference type="ChEBI" id="CHEBI:58053"/>
        <note>ligand shared between dimeric partners</note>
    </ligand>
</feature>
<feature type="binding site" evidence="1">
    <location>
        <begin position="40"/>
        <end position="42"/>
    </location>
    <ligand>
        <name>GTP</name>
        <dbReference type="ChEBI" id="CHEBI:37565"/>
    </ligand>
</feature>
<feature type="binding site" evidence="1">
    <location>
        <position position="40"/>
    </location>
    <ligand>
        <name>Mg(2+)</name>
        <dbReference type="ChEBI" id="CHEBI:18420"/>
    </ligand>
</feature>
<feature type="binding site" description="in other chain" evidence="1">
    <location>
        <position position="128"/>
    </location>
    <ligand>
        <name>IMP</name>
        <dbReference type="ChEBI" id="CHEBI:58053"/>
        <note>ligand shared between dimeric partners</note>
    </ligand>
</feature>
<feature type="binding site" evidence="1">
    <location>
        <position position="142"/>
    </location>
    <ligand>
        <name>IMP</name>
        <dbReference type="ChEBI" id="CHEBI:58053"/>
        <note>ligand shared between dimeric partners</note>
    </ligand>
</feature>
<feature type="binding site" description="in other chain" evidence="1">
    <location>
        <position position="223"/>
    </location>
    <ligand>
        <name>IMP</name>
        <dbReference type="ChEBI" id="CHEBI:58053"/>
        <note>ligand shared between dimeric partners</note>
    </ligand>
</feature>
<feature type="binding site" description="in other chain" evidence="1">
    <location>
        <position position="238"/>
    </location>
    <ligand>
        <name>IMP</name>
        <dbReference type="ChEBI" id="CHEBI:58053"/>
        <note>ligand shared between dimeric partners</note>
    </ligand>
</feature>
<feature type="binding site" evidence="1">
    <location>
        <begin position="298"/>
        <end position="304"/>
    </location>
    <ligand>
        <name>substrate</name>
    </ligand>
</feature>
<feature type="binding site" description="in other chain" evidence="1">
    <location>
        <position position="302"/>
    </location>
    <ligand>
        <name>IMP</name>
        <dbReference type="ChEBI" id="CHEBI:58053"/>
        <note>ligand shared between dimeric partners</note>
    </ligand>
</feature>
<feature type="binding site" evidence="1">
    <location>
        <position position="304"/>
    </location>
    <ligand>
        <name>GTP</name>
        <dbReference type="ChEBI" id="CHEBI:37565"/>
    </ligand>
</feature>
<feature type="binding site" evidence="1">
    <location>
        <begin position="330"/>
        <end position="332"/>
    </location>
    <ligand>
        <name>GTP</name>
        <dbReference type="ChEBI" id="CHEBI:37565"/>
    </ligand>
</feature>
<feature type="binding site" evidence="1">
    <location>
        <begin position="412"/>
        <end position="414"/>
    </location>
    <ligand>
        <name>GTP</name>
        <dbReference type="ChEBI" id="CHEBI:37565"/>
    </ligand>
</feature>
<keyword id="KW-0963">Cytoplasm</keyword>
<keyword id="KW-0342">GTP-binding</keyword>
<keyword id="KW-0436">Ligase</keyword>
<keyword id="KW-0460">Magnesium</keyword>
<keyword id="KW-0479">Metal-binding</keyword>
<keyword id="KW-0547">Nucleotide-binding</keyword>
<keyword id="KW-0658">Purine biosynthesis</keyword>